<feature type="chain" id="PRO_1000017601" description="Large ribosomal subunit protein bL27">
    <location>
        <begin position="1"/>
        <end position="84"/>
    </location>
</feature>
<feature type="region of interest" description="Disordered" evidence="2">
    <location>
        <begin position="1"/>
        <end position="22"/>
    </location>
</feature>
<gene>
    <name evidence="1" type="primary">rpmA</name>
    <name type="ordered locus">Shew_0870</name>
</gene>
<proteinExistence type="inferred from homology"/>
<reference key="1">
    <citation type="submission" date="2007-03" db="EMBL/GenBank/DDBJ databases">
        <title>Complete sequence of Shewanella loihica PV-4.</title>
        <authorList>
            <consortium name="US DOE Joint Genome Institute"/>
            <person name="Copeland A."/>
            <person name="Lucas S."/>
            <person name="Lapidus A."/>
            <person name="Barry K."/>
            <person name="Detter J.C."/>
            <person name="Glavina del Rio T."/>
            <person name="Hammon N."/>
            <person name="Israni S."/>
            <person name="Dalin E."/>
            <person name="Tice H."/>
            <person name="Pitluck S."/>
            <person name="Chain P."/>
            <person name="Malfatti S."/>
            <person name="Shin M."/>
            <person name="Vergez L."/>
            <person name="Schmutz J."/>
            <person name="Larimer F."/>
            <person name="Land M."/>
            <person name="Hauser L."/>
            <person name="Kyrpides N."/>
            <person name="Mikhailova N."/>
            <person name="Romine M.F."/>
            <person name="Serres G."/>
            <person name="Fredrickson J."/>
            <person name="Tiedje J."/>
            <person name="Richardson P."/>
        </authorList>
    </citation>
    <scope>NUCLEOTIDE SEQUENCE [LARGE SCALE GENOMIC DNA]</scope>
    <source>
        <strain>ATCC BAA-1088 / PV-4</strain>
    </source>
</reference>
<evidence type="ECO:0000255" key="1">
    <source>
        <dbReference type="HAMAP-Rule" id="MF_00539"/>
    </source>
</evidence>
<evidence type="ECO:0000256" key="2">
    <source>
        <dbReference type="SAM" id="MobiDB-lite"/>
    </source>
</evidence>
<evidence type="ECO:0000305" key="3"/>
<accession>A3QB94</accession>
<organism>
    <name type="scientific">Shewanella loihica (strain ATCC BAA-1088 / PV-4)</name>
    <dbReference type="NCBI Taxonomy" id="323850"/>
    <lineage>
        <taxon>Bacteria</taxon>
        <taxon>Pseudomonadati</taxon>
        <taxon>Pseudomonadota</taxon>
        <taxon>Gammaproteobacteria</taxon>
        <taxon>Alteromonadales</taxon>
        <taxon>Shewanellaceae</taxon>
        <taxon>Shewanella</taxon>
    </lineage>
</organism>
<sequence length="84" mass="9091">MAHKKAGGSTRNGRDSESKRLGVKRFGGESVLAGNIIVRQRGTKFHAGVNVGIGRDHTLFALTDGKVKFEVKGPKNRKFISIEA</sequence>
<comment type="similarity">
    <text evidence="1">Belongs to the bacterial ribosomal protein bL27 family.</text>
</comment>
<keyword id="KW-1185">Reference proteome</keyword>
<keyword id="KW-0687">Ribonucleoprotein</keyword>
<keyword id="KW-0689">Ribosomal protein</keyword>
<dbReference type="EMBL" id="CP000606">
    <property type="protein sequence ID" value="ABO22742.1"/>
    <property type="molecule type" value="Genomic_DNA"/>
</dbReference>
<dbReference type="RefSeq" id="WP_011864676.1">
    <property type="nucleotide sequence ID" value="NC_009092.1"/>
</dbReference>
<dbReference type="SMR" id="A3QB94"/>
<dbReference type="STRING" id="323850.Shew_0870"/>
<dbReference type="KEGG" id="slo:Shew_0870"/>
<dbReference type="eggNOG" id="COG0211">
    <property type="taxonomic scope" value="Bacteria"/>
</dbReference>
<dbReference type="HOGENOM" id="CLU_095424_4_1_6"/>
<dbReference type="OrthoDB" id="9803474at2"/>
<dbReference type="Proteomes" id="UP000001558">
    <property type="component" value="Chromosome"/>
</dbReference>
<dbReference type="GO" id="GO:0022625">
    <property type="term" value="C:cytosolic large ribosomal subunit"/>
    <property type="evidence" value="ECO:0007669"/>
    <property type="project" value="TreeGrafter"/>
</dbReference>
<dbReference type="GO" id="GO:0003735">
    <property type="term" value="F:structural constituent of ribosome"/>
    <property type="evidence" value="ECO:0007669"/>
    <property type="project" value="InterPro"/>
</dbReference>
<dbReference type="GO" id="GO:0006412">
    <property type="term" value="P:translation"/>
    <property type="evidence" value="ECO:0007669"/>
    <property type="project" value="UniProtKB-UniRule"/>
</dbReference>
<dbReference type="FunFam" id="2.40.50.100:FF:000001">
    <property type="entry name" value="50S ribosomal protein L27"/>
    <property type="match status" value="1"/>
</dbReference>
<dbReference type="Gene3D" id="2.40.50.100">
    <property type="match status" value="1"/>
</dbReference>
<dbReference type="HAMAP" id="MF_00539">
    <property type="entry name" value="Ribosomal_bL27"/>
    <property type="match status" value="1"/>
</dbReference>
<dbReference type="InterPro" id="IPR001684">
    <property type="entry name" value="Ribosomal_bL27"/>
</dbReference>
<dbReference type="InterPro" id="IPR018261">
    <property type="entry name" value="Ribosomal_bL27_CS"/>
</dbReference>
<dbReference type="NCBIfam" id="TIGR00062">
    <property type="entry name" value="L27"/>
    <property type="match status" value="1"/>
</dbReference>
<dbReference type="PANTHER" id="PTHR15893:SF0">
    <property type="entry name" value="LARGE RIBOSOMAL SUBUNIT PROTEIN BL27M"/>
    <property type="match status" value="1"/>
</dbReference>
<dbReference type="PANTHER" id="PTHR15893">
    <property type="entry name" value="RIBOSOMAL PROTEIN L27"/>
    <property type="match status" value="1"/>
</dbReference>
<dbReference type="Pfam" id="PF01016">
    <property type="entry name" value="Ribosomal_L27"/>
    <property type="match status" value="1"/>
</dbReference>
<dbReference type="PRINTS" id="PR00063">
    <property type="entry name" value="RIBOSOMALL27"/>
</dbReference>
<dbReference type="SUPFAM" id="SSF110324">
    <property type="entry name" value="Ribosomal L27 protein-like"/>
    <property type="match status" value="1"/>
</dbReference>
<dbReference type="PROSITE" id="PS00831">
    <property type="entry name" value="RIBOSOMAL_L27"/>
    <property type="match status" value="1"/>
</dbReference>
<name>RL27_SHELP</name>
<protein>
    <recommendedName>
        <fullName evidence="1">Large ribosomal subunit protein bL27</fullName>
    </recommendedName>
    <alternativeName>
        <fullName evidence="3">50S ribosomal protein L27</fullName>
    </alternativeName>
</protein>